<organism>
    <name type="scientific">Panax ginseng</name>
    <name type="common">Korean ginseng</name>
    <dbReference type="NCBI Taxonomy" id="4054"/>
    <lineage>
        <taxon>Eukaryota</taxon>
        <taxon>Viridiplantae</taxon>
        <taxon>Streptophyta</taxon>
        <taxon>Embryophyta</taxon>
        <taxon>Tracheophyta</taxon>
        <taxon>Spermatophyta</taxon>
        <taxon>Magnoliopsida</taxon>
        <taxon>eudicotyledons</taxon>
        <taxon>Gunneridae</taxon>
        <taxon>Pentapetalae</taxon>
        <taxon>asterids</taxon>
        <taxon>campanulids</taxon>
        <taxon>Apiales</taxon>
        <taxon>Araliaceae</taxon>
        <taxon>Panax</taxon>
    </lineage>
</organism>
<proteinExistence type="inferred from homology"/>
<feature type="chain" id="PRO_0000219755" description="Photosystem II reaction center protein L">
    <location>
        <begin position="1"/>
        <end position="38"/>
    </location>
</feature>
<feature type="transmembrane region" description="Helical" evidence="1">
    <location>
        <begin position="17"/>
        <end position="37"/>
    </location>
</feature>
<name>PSBL_PANGI</name>
<gene>
    <name evidence="1" type="primary">psbL</name>
    <name type="ORF">PSC0661</name>
</gene>
<geneLocation type="chloroplast"/>
<protein>
    <recommendedName>
        <fullName evidence="1">Photosystem II reaction center protein L</fullName>
        <shortName evidence="1">PSII-L</shortName>
    </recommendedName>
</protein>
<keyword id="KW-0150">Chloroplast</keyword>
<keyword id="KW-0472">Membrane</keyword>
<keyword id="KW-0602">Photosynthesis</keyword>
<keyword id="KW-0604">Photosystem II</keyword>
<keyword id="KW-0934">Plastid</keyword>
<keyword id="KW-0674">Reaction center</keyword>
<keyword id="KW-0793">Thylakoid</keyword>
<keyword id="KW-0812">Transmembrane</keyword>
<keyword id="KW-1133">Transmembrane helix</keyword>
<accession>Q68RZ1</accession>
<dbReference type="EMBL" id="AY582139">
    <property type="protein sequence ID" value="AAT98524.1"/>
    <property type="molecule type" value="Genomic_DNA"/>
</dbReference>
<dbReference type="RefSeq" id="YP_086981.1">
    <property type="nucleotide sequence ID" value="NC_006290.1"/>
</dbReference>
<dbReference type="SMR" id="Q68RZ1"/>
<dbReference type="GeneID" id="3021500"/>
<dbReference type="GO" id="GO:0009535">
    <property type="term" value="C:chloroplast thylakoid membrane"/>
    <property type="evidence" value="ECO:0007669"/>
    <property type="project" value="UniProtKB-SubCell"/>
</dbReference>
<dbReference type="GO" id="GO:0009539">
    <property type="term" value="C:photosystem II reaction center"/>
    <property type="evidence" value="ECO:0007669"/>
    <property type="project" value="InterPro"/>
</dbReference>
<dbReference type="GO" id="GO:0015979">
    <property type="term" value="P:photosynthesis"/>
    <property type="evidence" value="ECO:0007669"/>
    <property type="project" value="UniProtKB-UniRule"/>
</dbReference>
<dbReference type="HAMAP" id="MF_01317">
    <property type="entry name" value="PSII_PsbL"/>
    <property type="match status" value="1"/>
</dbReference>
<dbReference type="InterPro" id="IPR003372">
    <property type="entry name" value="PSII_PsbL"/>
</dbReference>
<dbReference type="InterPro" id="IPR037266">
    <property type="entry name" value="PSII_PsbL_sf"/>
</dbReference>
<dbReference type="NCBIfam" id="NF001972">
    <property type="entry name" value="PRK00753.1"/>
    <property type="match status" value="1"/>
</dbReference>
<dbReference type="Pfam" id="PF02419">
    <property type="entry name" value="PsbL"/>
    <property type="match status" value="1"/>
</dbReference>
<dbReference type="SUPFAM" id="SSF161017">
    <property type="entry name" value="Photosystem II reaction center protein L, PsbL"/>
    <property type="match status" value="1"/>
</dbReference>
<comment type="function">
    <text evidence="1">One of the components of the core complex of photosystem II (PSII). PSII is a light-driven water:plastoquinone oxidoreductase that uses light energy to abstract electrons from H(2)O, generating O(2) and a proton gradient subsequently used for ATP formation. It consists of a core antenna complex that captures photons, and an electron transfer chain that converts photonic excitation into a charge separation. This subunit is found at the monomer-monomer interface and is required for correct PSII assembly and/or dimerization.</text>
</comment>
<comment type="subunit">
    <text evidence="1">PSII is composed of 1 copy each of membrane proteins PsbA, PsbB, PsbC, PsbD, PsbE, PsbF, PsbH, PsbI, PsbJ, PsbK, PsbL, PsbM, PsbT, PsbX, PsbY, PsbZ, Psb30/Ycf12, at least 3 peripheral proteins of the oxygen-evolving complex and a large number of cofactors. It forms dimeric complexes.</text>
</comment>
<comment type="subcellular location">
    <subcellularLocation>
        <location evidence="1">Plastid</location>
        <location evidence="1">Chloroplast thylakoid membrane</location>
        <topology evidence="1">Single-pass membrane protein</topology>
    </subcellularLocation>
</comment>
<comment type="similarity">
    <text evidence="1">Belongs to the PsbL family.</text>
</comment>
<evidence type="ECO:0000255" key="1">
    <source>
        <dbReference type="HAMAP-Rule" id="MF_01317"/>
    </source>
</evidence>
<reference key="1">
    <citation type="journal article" date="2004" name="DNA Res.">
        <title>Complete chloroplast genome sequence from Korea ginseng (Panax schinseng Nees) and comparative analysis of sequence evolution among 17 vascular plants.</title>
        <authorList>
            <person name="Kim K.-J."/>
            <person name="Lee H.-L."/>
        </authorList>
    </citation>
    <scope>NUCLEOTIDE SEQUENCE [LARGE SCALE GENOMIC DNA]</scope>
</reference>
<sequence length="38" mass="4497">MTQSNPNEQNVELNRTSLYWGLLLIFVLAVLFSNYFFN</sequence>